<sequence>MDFRIGQGYDVHQLVPGRPLIIGGVTIPYERGLLGHSDADVLLHAITDALFGAAALGDIGRHFSDTDPRFKGADSRALLRECASRVAQAGFAIRNVDSTIIAQAPKLAPHIDAMRANIAADLDLPLDRVNVKAKTNEKLGYLGRGEGIEAQAAALVVREAAA</sequence>
<name>ISPF_BURP1</name>
<reference key="1">
    <citation type="journal article" date="2010" name="Genome Biol. Evol.">
        <title>Continuing evolution of Burkholderia mallei through genome reduction and large-scale rearrangements.</title>
        <authorList>
            <person name="Losada L."/>
            <person name="Ronning C.M."/>
            <person name="DeShazer D."/>
            <person name="Woods D."/>
            <person name="Fedorova N."/>
            <person name="Kim H.S."/>
            <person name="Shabalina S.A."/>
            <person name="Pearson T.R."/>
            <person name="Brinkac L."/>
            <person name="Tan P."/>
            <person name="Nandi T."/>
            <person name="Crabtree J."/>
            <person name="Badger J."/>
            <person name="Beckstrom-Sternberg S."/>
            <person name="Saqib M."/>
            <person name="Schutzer S.E."/>
            <person name="Keim P."/>
            <person name="Nierman W.C."/>
        </authorList>
    </citation>
    <scope>NUCLEOTIDE SEQUENCE [LARGE SCALE GENOMIC DNA]</scope>
    <source>
        <strain>1710b</strain>
    </source>
</reference>
<reference key="2">
    <citation type="submission" date="2008-10" db="PDB data bank">
        <title>Co-crystal structure of 2C-methyl-D-erythritol 2,4-cyclodiphosphate synthase from Burkholderia pseudomallei with hydrolyzed CDP.</title>
        <authorList>
            <consortium name="Seattle structural genomics center for infectious disease (SSGCID)"/>
        </authorList>
    </citation>
    <scope>X-RAY CRYSTALLOGRAPHY (2.09 ANGSTROMS) IN COMPLEX WITH SUBSTRATE ANALOGS AND ZINC IONS</scope>
    <scope>COFACTOR</scope>
    <scope>SUBUNIT</scope>
</reference>
<reference key="3">
    <citation type="submission" date="2009-10" db="PDB data bank">
        <title>Crystal structure of 2C-methyl-D-erythritol 2,4-cyclodiphosphate synthase from Burkholderia pseudomallei in complex with a fragment-nucleoside fusion D000161829.</title>
        <authorList>
            <consortium name="Seattle Structural Genomics Center for Infectious Disease (SSGCID)"/>
            <person name="Edwards T.E."/>
            <person name="Davies D.R."/>
            <person name="Hartley R."/>
            <person name="Zeller W."/>
        </authorList>
    </citation>
    <scope>X-RAY CRYSTALLOGRAPHY (2.05 ANGSTROMS) IN COMPLEX WITH SUBSTRATE ANALOGS AND ZINC IONS</scope>
    <scope>COFACTOR</scope>
    <scope>SUBUNIT</scope>
</reference>
<reference key="4">
    <citation type="journal article" date="2011" name="J. Struct. Funct. Genomics">
        <title>Leveraging structure determination with fragment screening for infectious disease drug targets: MECP synthase from Burkholderia pseudomallei.</title>
        <authorList>
            <person name="Begley D.W."/>
            <person name="Hartley R.C."/>
            <person name="Davies D.R."/>
            <person name="Edwards T.E."/>
            <person name="Leonard J.T."/>
            <person name="Abendroth J."/>
            <person name="Burris C.A."/>
            <person name="Bhandari J."/>
            <person name="Myler P.J."/>
            <person name="Staker B.L."/>
            <person name="Stewart L.J."/>
        </authorList>
    </citation>
    <scope>X-RAY CRYSTALLOGRAPHY (1.20 ANGSTROMS) IN COMPLEX WITH SUBSTRATE ANALOGS AND ZINC IONS</scope>
    <scope>COFACTOR</scope>
    <scope>SUBUNIT</scope>
</reference>
<comment type="function">
    <text evidence="1">Involved in the biosynthesis of isopentenyl diphosphate (IPP) and dimethylallyl diphosphate (DMAPP), two major building blocks of isoprenoid compounds. Catalyzes the conversion of 4-diphosphocytidyl-2-C-methyl-D-erythritol 2-phosphate (CDP-ME2P) to 2-C-methyl-D-erythritol 2,4-cyclodiphosphate (ME-CPP) with a corresponding release of cytidine 5-monophosphate (CMP).</text>
</comment>
<comment type="catalytic activity">
    <reaction evidence="1">
        <text>4-CDP-2-C-methyl-D-erythritol 2-phosphate = 2-C-methyl-D-erythritol 2,4-cyclic diphosphate + CMP</text>
        <dbReference type="Rhea" id="RHEA:23864"/>
        <dbReference type="ChEBI" id="CHEBI:57919"/>
        <dbReference type="ChEBI" id="CHEBI:58483"/>
        <dbReference type="ChEBI" id="CHEBI:60377"/>
        <dbReference type="EC" id="4.6.1.12"/>
    </reaction>
</comment>
<comment type="cofactor">
    <cofactor evidence="1 2 3 4">
        <name>a divalent metal cation</name>
        <dbReference type="ChEBI" id="CHEBI:60240"/>
    </cofactor>
    <text evidence="1 2 3 4">Binds 1 divalent metal cation per subunit.</text>
</comment>
<comment type="pathway">
    <text evidence="1">Isoprenoid biosynthesis; isopentenyl diphosphate biosynthesis via DXP pathway; isopentenyl diphosphate from 1-deoxy-D-xylulose 5-phosphate: step 4/6.</text>
</comment>
<comment type="subunit">
    <text evidence="1 2 3 4">Homotrimer.</text>
</comment>
<comment type="similarity">
    <text evidence="1">Belongs to the IspF family.</text>
</comment>
<gene>
    <name evidence="1" type="primary">ispF</name>
    <name type="ordered locus">BURPS1710b_2511</name>
</gene>
<accession>Q3JRA0</accession>
<protein>
    <recommendedName>
        <fullName evidence="1">2-C-methyl-D-erythritol 2,4-cyclodiphosphate synthase</fullName>
        <shortName evidence="1">MECDP-synthase</shortName>
        <shortName evidence="1">MECPP-synthase</shortName>
        <shortName evidence="1">MECPS</shortName>
        <ecNumber evidence="1">4.6.1.12</ecNumber>
    </recommendedName>
</protein>
<feature type="chain" id="PRO_0000237710" description="2-C-methyl-D-erythritol 2,4-cyclodiphosphate synthase">
    <location>
        <begin position="1"/>
        <end position="162"/>
    </location>
</feature>
<feature type="binding site" evidence="1">
    <location>
        <begin position="10"/>
        <end position="12"/>
    </location>
    <ligand>
        <name>4-CDP-2-C-methyl-D-erythritol 2-phosphate</name>
        <dbReference type="ChEBI" id="CHEBI:57919"/>
    </ligand>
</feature>
<feature type="binding site" evidence="1">
    <location>
        <position position="10"/>
    </location>
    <ligand>
        <name>a divalent metal cation</name>
        <dbReference type="ChEBI" id="CHEBI:60240"/>
    </ligand>
</feature>
<feature type="binding site" evidence="1">
    <location>
        <position position="12"/>
    </location>
    <ligand>
        <name>a divalent metal cation</name>
        <dbReference type="ChEBI" id="CHEBI:60240"/>
    </ligand>
</feature>
<feature type="binding site" evidence="1">
    <location>
        <begin position="36"/>
        <end position="37"/>
    </location>
    <ligand>
        <name>4-CDP-2-C-methyl-D-erythritol 2-phosphate</name>
        <dbReference type="ChEBI" id="CHEBI:57919"/>
    </ligand>
</feature>
<feature type="binding site">
    <location>
        <begin position="40"/>
        <end position="48"/>
    </location>
    <ligand>
        <name>4-CDP-2-C-methyl-D-erythritol 2-phosphate</name>
        <dbReference type="ChEBI" id="CHEBI:57919"/>
    </ligand>
</feature>
<feature type="binding site" evidence="1">
    <location>
        <position position="44"/>
    </location>
    <ligand>
        <name>a divalent metal cation</name>
        <dbReference type="ChEBI" id="CHEBI:60240"/>
    </ligand>
</feature>
<feature type="binding site" evidence="1">
    <location>
        <begin position="58"/>
        <end position="60"/>
    </location>
    <ligand>
        <name>4-CDP-2-C-methyl-D-erythritol 2-phosphate</name>
        <dbReference type="ChEBI" id="CHEBI:57919"/>
    </ligand>
</feature>
<feature type="binding site" evidence="1">
    <location>
        <begin position="63"/>
        <end position="67"/>
    </location>
    <ligand>
        <name>4-CDP-2-C-methyl-D-erythritol 2-phosphate</name>
        <dbReference type="ChEBI" id="CHEBI:57919"/>
    </ligand>
</feature>
<feature type="binding site">
    <location>
        <begin position="102"/>
        <end position="108"/>
    </location>
    <ligand>
        <name>4-CDP-2-C-methyl-D-erythritol 2-phosphate</name>
        <dbReference type="ChEBI" id="CHEBI:57919"/>
    </ligand>
</feature>
<feature type="binding site">
    <location>
        <begin position="133"/>
        <end position="137"/>
    </location>
    <ligand>
        <name>4-CDP-2-C-methyl-D-erythritol 2-phosphate</name>
        <dbReference type="ChEBI" id="CHEBI:57919"/>
    </ligand>
</feature>
<feature type="binding site" evidence="1">
    <location>
        <position position="144"/>
    </location>
    <ligand>
        <name>4-CDP-2-C-methyl-D-erythritol 2-phosphate</name>
        <dbReference type="ChEBI" id="CHEBI:57919"/>
    </ligand>
</feature>
<feature type="site" description="Transition state stabilizer" evidence="1">
    <location>
        <position position="36"/>
    </location>
</feature>
<feature type="site" description="Transition state stabilizer" evidence="1">
    <location>
        <position position="135"/>
    </location>
</feature>
<feature type="strand" evidence="5">
    <location>
        <begin position="3"/>
        <end position="16"/>
    </location>
</feature>
<feature type="strand" evidence="5">
    <location>
        <begin position="20"/>
        <end position="22"/>
    </location>
</feature>
<feature type="strand" evidence="5">
    <location>
        <begin position="25"/>
        <end position="27"/>
    </location>
</feature>
<feature type="strand" evidence="5">
    <location>
        <begin position="30"/>
        <end position="33"/>
    </location>
</feature>
<feature type="strand" evidence="5">
    <location>
        <begin position="35"/>
        <end position="37"/>
    </location>
</feature>
<feature type="helix" evidence="5">
    <location>
        <begin position="41"/>
        <end position="53"/>
    </location>
</feature>
<feature type="helix" evidence="5">
    <location>
        <begin position="59"/>
        <end position="62"/>
    </location>
</feature>
<feature type="helix" evidence="6">
    <location>
        <begin position="68"/>
        <end position="70"/>
    </location>
</feature>
<feature type="helix" evidence="5">
    <location>
        <begin position="75"/>
        <end position="88"/>
    </location>
</feature>
<feature type="strand" evidence="5">
    <location>
        <begin position="91"/>
        <end position="101"/>
    </location>
</feature>
<feature type="strand" evidence="5">
    <location>
        <begin position="103"/>
        <end position="105"/>
    </location>
</feature>
<feature type="helix" evidence="5">
    <location>
        <begin position="108"/>
        <end position="110"/>
    </location>
</feature>
<feature type="helix" evidence="5">
    <location>
        <begin position="111"/>
        <end position="122"/>
    </location>
</feature>
<feature type="helix" evidence="5">
    <location>
        <begin position="126"/>
        <end position="128"/>
    </location>
</feature>
<feature type="strand" evidence="5">
    <location>
        <begin position="129"/>
        <end position="134"/>
    </location>
</feature>
<feature type="helix" evidence="5">
    <location>
        <begin position="140"/>
        <end position="143"/>
    </location>
</feature>
<feature type="strand" evidence="5">
    <location>
        <begin position="146"/>
        <end position="158"/>
    </location>
</feature>
<dbReference type="EC" id="4.6.1.12" evidence="1"/>
<dbReference type="EMBL" id="CP000124">
    <property type="protein sequence ID" value="ABA47450.1"/>
    <property type="molecule type" value="Genomic_DNA"/>
</dbReference>
<dbReference type="RefSeq" id="WP_004191369.1">
    <property type="nucleotide sequence ID" value="NC_007434.1"/>
</dbReference>
<dbReference type="PDB" id="3F0D">
    <property type="method" value="X-ray"/>
    <property type="resolution" value="1.20 A"/>
    <property type="chains" value="A/B/C/D/E/F=1-162"/>
</dbReference>
<dbReference type="PDB" id="3F0E">
    <property type="method" value="X-ray"/>
    <property type="resolution" value="2.05 A"/>
    <property type="chains" value="A/B/C=1-162"/>
</dbReference>
<dbReference type="PDB" id="3F0F">
    <property type="method" value="X-ray"/>
    <property type="resolution" value="2.09 A"/>
    <property type="chains" value="A/B/C=1-162"/>
</dbReference>
<dbReference type="PDB" id="3F0G">
    <property type="method" value="X-ray"/>
    <property type="resolution" value="2.08 A"/>
    <property type="chains" value="A/B/C/D/E/F=1-162"/>
</dbReference>
<dbReference type="PDB" id="3IEQ">
    <property type="method" value="X-ray"/>
    <property type="resolution" value="2.10 A"/>
    <property type="chains" value="A/B/C=1-162"/>
</dbReference>
<dbReference type="PDB" id="3JVH">
    <property type="method" value="X-ray"/>
    <property type="resolution" value="1.69 A"/>
    <property type="chains" value="A/B/C=1-162"/>
</dbReference>
<dbReference type="PDB" id="3K14">
    <property type="method" value="X-ray"/>
    <property type="resolution" value="1.70 A"/>
    <property type="chains" value="A/B/C=1-162"/>
</dbReference>
<dbReference type="PDB" id="3K2X">
    <property type="method" value="X-ray"/>
    <property type="resolution" value="1.85 A"/>
    <property type="chains" value="A/B/C=1-162"/>
</dbReference>
<dbReference type="PDB" id="3KE1">
    <property type="method" value="X-ray"/>
    <property type="resolution" value="2.05 A"/>
    <property type="chains" value="A/B/C=1-162"/>
</dbReference>
<dbReference type="PDB" id="3MBM">
    <property type="method" value="X-ray"/>
    <property type="resolution" value="1.80 A"/>
    <property type="chains" value="A/B/C=1-162"/>
</dbReference>
<dbReference type="PDB" id="3P0Z">
    <property type="method" value="X-ray"/>
    <property type="resolution" value="1.95 A"/>
    <property type="chains" value="A/B/C=1-162"/>
</dbReference>
<dbReference type="PDB" id="3P10">
    <property type="method" value="X-ray"/>
    <property type="resolution" value="1.70 A"/>
    <property type="chains" value="A/B/C=1-162"/>
</dbReference>
<dbReference type="PDB" id="3QHD">
    <property type="method" value="X-ray"/>
    <property type="resolution" value="1.70 A"/>
    <property type="chains" value="A/B/C=1-162"/>
</dbReference>
<dbReference type="PDB" id="6MWF">
    <property type="method" value="X-ray"/>
    <property type="resolution" value="1.75 A"/>
    <property type="chains" value="A/B/C=1-162"/>
</dbReference>
<dbReference type="PDB" id="6MWI">
    <property type="method" value="X-ray"/>
    <property type="resolution" value="1.75 A"/>
    <property type="chains" value="A/B/C=1-162"/>
</dbReference>
<dbReference type="PDB" id="6MWJ">
    <property type="method" value="X-ray"/>
    <property type="resolution" value="2.05 A"/>
    <property type="chains" value="A/B/C=1-162"/>
</dbReference>
<dbReference type="PDB" id="6MWK">
    <property type="method" value="X-ray"/>
    <property type="resolution" value="1.80 A"/>
    <property type="chains" value="A/B/C=1-162"/>
</dbReference>
<dbReference type="PDB" id="6NMO">
    <property type="method" value="X-ray"/>
    <property type="resolution" value="1.45 A"/>
    <property type="chains" value="A/B/C=1-162"/>
</dbReference>
<dbReference type="PDB" id="6V3M">
    <property type="method" value="X-ray"/>
    <property type="resolution" value="1.55 A"/>
    <property type="chains" value="A/B/C=1-162"/>
</dbReference>
<dbReference type="PDBsum" id="3F0D"/>
<dbReference type="PDBsum" id="3F0E"/>
<dbReference type="PDBsum" id="3F0F"/>
<dbReference type="PDBsum" id="3F0G"/>
<dbReference type="PDBsum" id="3IEQ"/>
<dbReference type="PDBsum" id="3JVH"/>
<dbReference type="PDBsum" id="3K14"/>
<dbReference type="PDBsum" id="3K2X"/>
<dbReference type="PDBsum" id="3KE1"/>
<dbReference type="PDBsum" id="3MBM"/>
<dbReference type="PDBsum" id="3P0Z"/>
<dbReference type="PDBsum" id="3P10"/>
<dbReference type="PDBsum" id="3QHD"/>
<dbReference type="PDBsum" id="6MWF"/>
<dbReference type="PDBsum" id="6MWI"/>
<dbReference type="PDBsum" id="6MWJ"/>
<dbReference type="PDBsum" id="6MWK"/>
<dbReference type="PDBsum" id="6NMO"/>
<dbReference type="PDBsum" id="6V3M"/>
<dbReference type="SMR" id="Q3JRA0"/>
<dbReference type="EnsemblBacteria" id="ABA47450">
    <property type="protein sequence ID" value="ABA47450"/>
    <property type="gene ID" value="BURPS1710b_2511"/>
</dbReference>
<dbReference type="GeneID" id="93060627"/>
<dbReference type="KEGG" id="bpm:BURPS1710b_2511"/>
<dbReference type="HOGENOM" id="CLU_084630_2_0_4"/>
<dbReference type="UniPathway" id="UPA00056">
    <property type="reaction ID" value="UER00095"/>
</dbReference>
<dbReference type="EvolutionaryTrace" id="Q3JRA0"/>
<dbReference type="Proteomes" id="UP000002700">
    <property type="component" value="Chromosome I"/>
</dbReference>
<dbReference type="GO" id="GO:0008685">
    <property type="term" value="F:2-C-methyl-D-erythritol 2,4-cyclodiphosphate synthase activity"/>
    <property type="evidence" value="ECO:0007669"/>
    <property type="project" value="UniProtKB-UniRule"/>
</dbReference>
<dbReference type="GO" id="GO:0046872">
    <property type="term" value="F:metal ion binding"/>
    <property type="evidence" value="ECO:0007669"/>
    <property type="project" value="UniProtKB-KW"/>
</dbReference>
<dbReference type="GO" id="GO:0019288">
    <property type="term" value="P:isopentenyl diphosphate biosynthetic process, methylerythritol 4-phosphate pathway"/>
    <property type="evidence" value="ECO:0007669"/>
    <property type="project" value="UniProtKB-UniRule"/>
</dbReference>
<dbReference type="GO" id="GO:0016114">
    <property type="term" value="P:terpenoid biosynthetic process"/>
    <property type="evidence" value="ECO:0007669"/>
    <property type="project" value="InterPro"/>
</dbReference>
<dbReference type="CDD" id="cd00554">
    <property type="entry name" value="MECDP_synthase"/>
    <property type="match status" value="1"/>
</dbReference>
<dbReference type="FunFam" id="3.30.1330.50:FF:000001">
    <property type="entry name" value="2-C-methyl-D-erythritol 2,4-cyclodiphosphate synthase"/>
    <property type="match status" value="1"/>
</dbReference>
<dbReference type="Gene3D" id="3.30.1330.50">
    <property type="entry name" value="2-C-methyl-D-erythritol 2,4-cyclodiphosphate synthase"/>
    <property type="match status" value="1"/>
</dbReference>
<dbReference type="HAMAP" id="MF_00107">
    <property type="entry name" value="IspF"/>
    <property type="match status" value="1"/>
</dbReference>
<dbReference type="InterPro" id="IPR003526">
    <property type="entry name" value="MECDP_synthase"/>
</dbReference>
<dbReference type="InterPro" id="IPR020555">
    <property type="entry name" value="MECDP_synthase_CS"/>
</dbReference>
<dbReference type="InterPro" id="IPR036571">
    <property type="entry name" value="MECDP_synthase_sf"/>
</dbReference>
<dbReference type="NCBIfam" id="TIGR00151">
    <property type="entry name" value="ispF"/>
    <property type="match status" value="1"/>
</dbReference>
<dbReference type="PANTHER" id="PTHR43181">
    <property type="entry name" value="2-C-METHYL-D-ERYTHRITOL 2,4-CYCLODIPHOSPHATE SYNTHASE, CHLOROPLASTIC"/>
    <property type="match status" value="1"/>
</dbReference>
<dbReference type="PANTHER" id="PTHR43181:SF1">
    <property type="entry name" value="2-C-METHYL-D-ERYTHRITOL 2,4-CYCLODIPHOSPHATE SYNTHASE, CHLOROPLASTIC"/>
    <property type="match status" value="1"/>
</dbReference>
<dbReference type="Pfam" id="PF02542">
    <property type="entry name" value="YgbB"/>
    <property type="match status" value="1"/>
</dbReference>
<dbReference type="SUPFAM" id="SSF69765">
    <property type="entry name" value="IpsF-like"/>
    <property type="match status" value="1"/>
</dbReference>
<dbReference type="PROSITE" id="PS01350">
    <property type="entry name" value="ISPF"/>
    <property type="match status" value="1"/>
</dbReference>
<keyword id="KW-0002">3D-structure</keyword>
<keyword id="KW-0414">Isoprene biosynthesis</keyword>
<keyword id="KW-0456">Lyase</keyword>
<keyword id="KW-0479">Metal-binding</keyword>
<organism>
    <name type="scientific">Burkholderia pseudomallei (strain 1710b)</name>
    <dbReference type="NCBI Taxonomy" id="320372"/>
    <lineage>
        <taxon>Bacteria</taxon>
        <taxon>Pseudomonadati</taxon>
        <taxon>Pseudomonadota</taxon>
        <taxon>Betaproteobacteria</taxon>
        <taxon>Burkholderiales</taxon>
        <taxon>Burkholderiaceae</taxon>
        <taxon>Burkholderia</taxon>
        <taxon>pseudomallei group</taxon>
    </lineage>
</organism>
<proteinExistence type="evidence at protein level"/>
<evidence type="ECO:0000255" key="1">
    <source>
        <dbReference type="HAMAP-Rule" id="MF_00107"/>
    </source>
</evidence>
<evidence type="ECO:0000269" key="2">
    <source>
    </source>
</evidence>
<evidence type="ECO:0000269" key="3">
    <source ref="2"/>
</evidence>
<evidence type="ECO:0000269" key="4">
    <source ref="3"/>
</evidence>
<evidence type="ECO:0007829" key="5">
    <source>
        <dbReference type="PDB" id="3F0D"/>
    </source>
</evidence>
<evidence type="ECO:0007829" key="6">
    <source>
        <dbReference type="PDB" id="6NMO"/>
    </source>
</evidence>